<feature type="chain" id="PRO_1000095301" description="Aspartyl/glutamyl-tRNA(Asn/Gln) amidotransferase subunit C">
    <location>
        <begin position="1"/>
        <end position="97"/>
    </location>
</feature>
<protein>
    <recommendedName>
        <fullName evidence="1">Aspartyl/glutamyl-tRNA(Asn/Gln) amidotransferase subunit C</fullName>
        <shortName evidence="1">Asp/Glu-ADT subunit C</shortName>
        <ecNumber evidence="1">6.3.5.-</ecNumber>
    </recommendedName>
</protein>
<organism>
    <name type="scientific">Nostoc punctiforme (strain ATCC 29133 / PCC 73102)</name>
    <dbReference type="NCBI Taxonomy" id="63737"/>
    <lineage>
        <taxon>Bacteria</taxon>
        <taxon>Bacillati</taxon>
        <taxon>Cyanobacteriota</taxon>
        <taxon>Cyanophyceae</taxon>
        <taxon>Nostocales</taxon>
        <taxon>Nostocaceae</taxon>
        <taxon>Nostoc</taxon>
    </lineage>
</organism>
<comment type="function">
    <text evidence="1">Allows the formation of correctly charged Asn-tRNA(Asn) or Gln-tRNA(Gln) through the transamidation of misacylated Asp-tRNA(Asn) or Glu-tRNA(Gln) in organisms which lack either or both of asparaginyl-tRNA or glutaminyl-tRNA synthetases. The reaction takes place in the presence of glutamine and ATP through an activated phospho-Asp-tRNA(Asn) or phospho-Glu-tRNA(Gln).</text>
</comment>
<comment type="catalytic activity">
    <reaction evidence="1">
        <text>L-glutamyl-tRNA(Gln) + L-glutamine + ATP + H2O = L-glutaminyl-tRNA(Gln) + L-glutamate + ADP + phosphate + H(+)</text>
        <dbReference type="Rhea" id="RHEA:17521"/>
        <dbReference type="Rhea" id="RHEA-COMP:9681"/>
        <dbReference type="Rhea" id="RHEA-COMP:9684"/>
        <dbReference type="ChEBI" id="CHEBI:15377"/>
        <dbReference type="ChEBI" id="CHEBI:15378"/>
        <dbReference type="ChEBI" id="CHEBI:29985"/>
        <dbReference type="ChEBI" id="CHEBI:30616"/>
        <dbReference type="ChEBI" id="CHEBI:43474"/>
        <dbReference type="ChEBI" id="CHEBI:58359"/>
        <dbReference type="ChEBI" id="CHEBI:78520"/>
        <dbReference type="ChEBI" id="CHEBI:78521"/>
        <dbReference type="ChEBI" id="CHEBI:456216"/>
    </reaction>
</comment>
<comment type="catalytic activity">
    <reaction evidence="1">
        <text>L-aspartyl-tRNA(Asn) + L-glutamine + ATP + H2O = L-asparaginyl-tRNA(Asn) + L-glutamate + ADP + phosphate + 2 H(+)</text>
        <dbReference type="Rhea" id="RHEA:14513"/>
        <dbReference type="Rhea" id="RHEA-COMP:9674"/>
        <dbReference type="Rhea" id="RHEA-COMP:9677"/>
        <dbReference type="ChEBI" id="CHEBI:15377"/>
        <dbReference type="ChEBI" id="CHEBI:15378"/>
        <dbReference type="ChEBI" id="CHEBI:29985"/>
        <dbReference type="ChEBI" id="CHEBI:30616"/>
        <dbReference type="ChEBI" id="CHEBI:43474"/>
        <dbReference type="ChEBI" id="CHEBI:58359"/>
        <dbReference type="ChEBI" id="CHEBI:78515"/>
        <dbReference type="ChEBI" id="CHEBI:78516"/>
        <dbReference type="ChEBI" id="CHEBI:456216"/>
    </reaction>
</comment>
<comment type="subunit">
    <text evidence="1">Heterotrimer of A, B and C subunits.</text>
</comment>
<comment type="similarity">
    <text evidence="1">Belongs to the GatC family.</text>
</comment>
<reference key="1">
    <citation type="journal article" date="2013" name="Plant Physiol.">
        <title>A Nostoc punctiforme Sugar Transporter Necessary to Establish a Cyanobacterium-Plant Symbiosis.</title>
        <authorList>
            <person name="Ekman M."/>
            <person name="Picossi S."/>
            <person name="Campbell E.L."/>
            <person name="Meeks J.C."/>
            <person name="Flores E."/>
        </authorList>
    </citation>
    <scope>NUCLEOTIDE SEQUENCE [LARGE SCALE GENOMIC DNA]</scope>
    <source>
        <strain>ATCC 29133 / PCC 73102</strain>
    </source>
</reference>
<sequence>MIDQEQVHKVANLARLELTPEEEEQFTTQLGSILDYIQQLDELDVSNVPPTTRAIDVSNITREDELQPYANRESILNSAPEQEGEFFKVPKILNSNE</sequence>
<name>GATC_NOSP7</name>
<accession>B2J1S6</accession>
<evidence type="ECO:0000255" key="1">
    <source>
        <dbReference type="HAMAP-Rule" id="MF_00122"/>
    </source>
</evidence>
<proteinExistence type="inferred from homology"/>
<gene>
    <name evidence="1" type="primary">gatC</name>
    <name type="ordered locus">Npun_R3524</name>
</gene>
<dbReference type="EC" id="6.3.5.-" evidence="1"/>
<dbReference type="EMBL" id="CP001037">
    <property type="protein sequence ID" value="ACC81928.1"/>
    <property type="molecule type" value="Genomic_DNA"/>
</dbReference>
<dbReference type="RefSeq" id="WP_012409901.1">
    <property type="nucleotide sequence ID" value="NC_010628.1"/>
</dbReference>
<dbReference type="SMR" id="B2J1S6"/>
<dbReference type="STRING" id="63737.Npun_R3524"/>
<dbReference type="EnsemblBacteria" id="ACC81928">
    <property type="protein sequence ID" value="ACC81928"/>
    <property type="gene ID" value="Npun_R3524"/>
</dbReference>
<dbReference type="KEGG" id="npu:Npun_R3524"/>
<dbReference type="eggNOG" id="COG0721">
    <property type="taxonomic scope" value="Bacteria"/>
</dbReference>
<dbReference type="HOGENOM" id="CLU_105899_2_0_3"/>
<dbReference type="OrthoDB" id="9813938at2"/>
<dbReference type="PhylomeDB" id="B2J1S6"/>
<dbReference type="Proteomes" id="UP000001191">
    <property type="component" value="Chromosome"/>
</dbReference>
<dbReference type="GO" id="GO:0050566">
    <property type="term" value="F:asparaginyl-tRNA synthase (glutamine-hydrolyzing) activity"/>
    <property type="evidence" value="ECO:0007669"/>
    <property type="project" value="RHEA"/>
</dbReference>
<dbReference type="GO" id="GO:0005524">
    <property type="term" value="F:ATP binding"/>
    <property type="evidence" value="ECO:0007669"/>
    <property type="project" value="UniProtKB-KW"/>
</dbReference>
<dbReference type="GO" id="GO:0050567">
    <property type="term" value="F:glutaminyl-tRNA synthase (glutamine-hydrolyzing) activity"/>
    <property type="evidence" value="ECO:0007669"/>
    <property type="project" value="UniProtKB-UniRule"/>
</dbReference>
<dbReference type="GO" id="GO:0070681">
    <property type="term" value="P:glutaminyl-tRNAGln biosynthesis via transamidation"/>
    <property type="evidence" value="ECO:0007669"/>
    <property type="project" value="TreeGrafter"/>
</dbReference>
<dbReference type="GO" id="GO:0006450">
    <property type="term" value="P:regulation of translational fidelity"/>
    <property type="evidence" value="ECO:0007669"/>
    <property type="project" value="InterPro"/>
</dbReference>
<dbReference type="GO" id="GO:0006412">
    <property type="term" value="P:translation"/>
    <property type="evidence" value="ECO:0007669"/>
    <property type="project" value="UniProtKB-UniRule"/>
</dbReference>
<dbReference type="Gene3D" id="1.10.20.60">
    <property type="entry name" value="Glu-tRNAGln amidotransferase C subunit, N-terminal domain"/>
    <property type="match status" value="1"/>
</dbReference>
<dbReference type="HAMAP" id="MF_00122">
    <property type="entry name" value="GatC"/>
    <property type="match status" value="1"/>
</dbReference>
<dbReference type="InterPro" id="IPR036113">
    <property type="entry name" value="Asp/Glu-ADT_sf_sub_c"/>
</dbReference>
<dbReference type="InterPro" id="IPR003837">
    <property type="entry name" value="GatC"/>
</dbReference>
<dbReference type="NCBIfam" id="TIGR00135">
    <property type="entry name" value="gatC"/>
    <property type="match status" value="1"/>
</dbReference>
<dbReference type="PANTHER" id="PTHR15004">
    <property type="entry name" value="GLUTAMYL-TRNA(GLN) AMIDOTRANSFERASE SUBUNIT C, MITOCHONDRIAL"/>
    <property type="match status" value="1"/>
</dbReference>
<dbReference type="PANTHER" id="PTHR15004:SF0">
    <property type="entry name" value="GLUTAMYL-TRNA(GLN) AMIDOTRANSFERASE SUBUNIT C, MITOCHONDRIAL"/>
    <property type="match status" value="1"/>
</dbReference>
<dbReference type="Pfam" id="PF02686">
    <property type="entry name" value="GatC"/>
    <property type="match status" value="1"/>
</dbReference>
<dbReference type="SUPFAM" id="SSF141000">
    <property type="entry name" value="Glu-tRNAGln amidotransferase C subunit"/>
    <property type="match status" value="1"/>
</dbReference>
<keyword id="KW-0067">ATP-binding</keyword>
<keyword id="KW-0436">Ligase</keyword>
<keyword id="KW-0547">Nucleotide-binding</keyword>
<keyword id="KW-0648">Protein biosynthesis</keyword>
<keyword id="KW-1185">Reference proteome</keyword>